<gene>
    <name type="primary">MT-CYB</name>
    <name type="synonym">COB</name>
    <name type="synonym">CYTB</name>
    <name type="synonym">MTCYB</name>
</gene>
<reference key="1">
    <citation type="journal article" date="1997" name="Condor">
        <title>Intergeneric relationships of the New World jays inferred from cytochrome b gene sequences.</title>
        <authorList>
            <person name="Espinosa de los Monteros A."/>
            <person name="Cracraft J."/>
        </authorList>
    </citation>
    <scope>NUCLEOTIDE SEQUENCE [GENOMIC DNA]</scope>
</reference>
<geneLocation type="mitochondrion"/>
<accession>P92493</accession>
<feature type="chain" id="PRO_0000060605" description="Cytochrome b">
    <location>
        <begin position="1"/>
        <end position="380"/>
    </location>
</feature>
<feature type="transmembrane region" description="Helical" evidence="2">
    <location>
        <begin position="34"/>
        <end position="54"/>
    </location>
</feature>
<feature type="transmembrane region" description="Helical" evidence="2">
    <location>
        <begin position="78"/>
        <end position="99"/>
    </location>
</feature>
<feature type="transmembrane region" description="Helical" evidence="2">
    <location>
        <begin position="114"/>
        <end position="134"/>
    </location>
</feature>
<feature type="transmembrane region" description="Helical" evidence="2">
    <location>
        <begin position="179"/>
        <end position="199"/>
    </location>
</feature>
<feature type="transmembrane region" description="Helical" evidence="2">
    <location>
        <begin position="227"/>
        <end position="247"/>
    </location>
</feature>
<feature type="transmembrane region" description="Helical" evidence="2">
    <location>
        <begin position="289"/>
        <end position="309"/>
    </location>
</feature>
<feature type="transmembrane region" description="Helical" evidence="2">
    <location>
        <begin position="321"/>
        <end position="341"/>
    </location>
</feature>
<feature type="transmembrane region" description="Helical" evidence="2">
    <location>
        <begin position="348"/>
        <end position="368"/>
    </location>
</feature>
<feature type="binding site" description="axial binding residue" evidence="2">
    <location>
        <position position="84"/>
    </location>
    <ligand>
        <name>heme b</name>
        <dbReference type="ChEBI" id="CHEBI:60344"/>
        <label>b562</label>
    </ligand>
    <ligandPart>
        <name>Fe</name>
        <dbReference type="ChEBI" id="CHEBI:18248"/>
    </ligandPart>
</feature>
<feature type="binding site" description="axial binding residue" evidence="2">
    <location>
        <position position="98"/>
    </location>
    <ligand>
        <name>heme b</name>
        <dbReference type="ChEBI" id="CHEBI:60344"/>
        <label>b566</label>
    </ligand>
    <ligandPart>
        <name>Fe</name>
        <dbReference type="ChEBI" id="CHEBI:18248"/>
    </ligandPart>
</feature>
<feature type="binding site" description="axial binding residue" evidence="2">
    <location>
        <position position="183"/>
    </location>
    <ligand>
        <name>heme b</name>
        <dbReference type="ChEBI" id="CHEBI:60344"/>
        <label>b562</label>
    </ligand>
    <ligandPart>
        <name>Fe</name>
        <dbReference type="ChEBI" id="CHEBI:18248"/>
    </ligandPart>
</feature>
<feature type="binding site" description="axial binding residue" evidence="2">
    <location>
        <position position="197"/>
    </location>
    <ligand>
        <name>heme b</name>
        <dbReference type="ChEBI" id="CHEBI:60344"/>
        <label>b566</label>
    </ligand>
    <ligandPart>
        <name>Fe</name>
        <dbReference type="ChEBI" id="CHEBI:18248"/>
    </ligandPart>
</feature>
<feature type="binding site" evidence="2">
    <location>
        <position position="202"/>
    </location>
    <ligand>
        <name>a ubiquinone</name>
        <dbReference type="ChEBI" id="CHEBI:16389"/>
    </ligand>
</feature>
<sequence>MALNLRKTHPLLKIVNDSLIDLPTPSNISAWWNFGSLLGICLITQIITGLLLAMHYTADTSLAFTSVAHMCRNVQFGWLIRHLHANGASFFFICIYLHIGRGFYYGSYLNKETWNIGVILLLTLMATAFVGYVLPWGQMSFWGATVITNLFSAIPYVGQTLVEWLWGGFSVDNPTLTPLFALHFLLPFVIAGLTLVHLTFLHETGSNNPLGIPSDCDKIPFQPYYSIKDLLGFVLMLTPLIAMALFAPNFLGDPENFTPANPLVTPPHIKPEWYFLFAYAILRSIPNKLGGVLALAASVLVLFLIPLLHITKQRSMTFRPLSQMLFWTLVADLLILTWVGSQPVEHPFIIIGQLASLAYFTIILVLFPIVSALENKMLNL</sequence>
<organism>
    <name type="scientific">Aphelocoma coerulescens</name>
    <name type="common">Florida scrub-jay</name>
    <name type="synonym">Corvus coerulescens</name>
    <dbReference type="NCBI Taxonomy" id="39617"/>
    <lineage>
        <taxon>Eukaryota</taxon>
        <taxon>Metazoa</taxon>
        <taxon>Chordata</taxon>
        <taxon>Craniata</taxon>
        <taxon>Vertebrata</taxon>
        <taxon>Euteleostomi</taxon>
        <taxon>Archelosauria</taxon>
        <taxon>Archosauria</taxon>
        <taxon>Dinosauria</taxon>
        <taxon>Saurischia</taxon>
        <taxon>Theropoda</taxon>
        <taxon>Coelurosauria</taxon>
        <taxon>Aves</taxon>
        <taxon>Neognathae</taxon>
        <taxon>Neoaves</taxon>
        <taxon>Telluraves</taxon>
        <taxon>Australaves</taxon>
        <taxon>Passeriformes</taxon>
        <taxon>Corvoidea</taxon>
        <taxon>Corvidae</taxon>
        <taxon>Aphelocoma</taxon>
    </lineage>
</organism>
<keyword id="KW-0249">Electron transport</keyword>
<keyword id="KW-0349">Heme</keyword>
<keyword id="KW-0408">Iron</keyword>
<keyword id="KW-0472">Membrane</keyword>
<keyword id="KW-0479">Metal-binding</keyword>
<keyword id="KW-0496">Mitochondrion</keyword>
<keyword id="KW-0999">Mitochondrion inner membrane</keyword>
<keyword id="KW-0679">Respiratory chain</keyword>
<keyword id="KW-0812">Transmembrane</keyword>
<keyword id="KW-1133">Transmembrane helix</keyword>
<keyword id="KW-0813">Transport</keyword>
<keyword id="KW-0830">Ubiquinone</keyword>
<name>CYB_APHCE</name>
<protein>
    <recommendedName>
        <fullName>Cytochrome b</fullName>
    </recommendedName>
    <alternativeName>
        <fullName>Complex III subunit 3</fullName>
    </alternativeName>
    <alternativeName>
        <fullName>Complex III subunit III</fullName>
    </alternativeName>
    <alternativeName>
        <fullName>Cytochrome b-c1 complex subunit 3</fullName>
    </alternativeName>
    <alternativeName>
        <fullName>Ubiquinol-cytochrome-c reductase complex cytochrome b subunit</fullName>
    </alternativeName>
</protein>
<dbReference type="EMBL" id="U77335">
    <property type="protein sequence ID" value="AAB48978.1"/>
    <property type="molecule type" value="Genomic_DNA"/>
</dbReference>
<dbReference type="SMR" id="P92493"/>
<dbReference type="GO" id="GO:0005743">
    <property type="term" value="C:mitochondrial inner membrane"/>
    <property type="evidence" value="ECO:0007669"/>
    <property type="project" value="UniProtKB-SubCell"/>
</dbReference>
<dbReference type="GO" id="GO:0045275">
    <property type="term" value="C:respiratory chain complex III"/>
    <property type="evidence" value="ECO:0007669"/>
    <property type="project" value="InterPro"/>
</dbReference>
<dbReference type="GO" id="GO:0046872">
    <property type="term" value="F:metal ion binding"/>
    <property type="evidence" value="ECO:0007669"/>
    <property type="project" value="UniProtKB-KW"/>
</dbReference>
<dbReference type="GO" id="GO:0008121">
    <property type="term" value="F:ubiquinol-cytochrome-c reductase activity"/>
    <property type="evidence" value="ECO:0007669"/>
    <property type="project" value="InterPro"/>
</dbReference>
<dbReference type="GO" id="GO:0006122">
    <property type="term" value="P:mitochondrial electron transport, ubiquinol to cytochrome c"/>
    <property type="evidence" value="ECO:0007669"/>
    <property type="project" value="TreeGrafter"/>
</dbReference>
<dbReference type="CDD" id="cd00290">
    <property type="entry name" value="cytochrome_b_C"/>
    <property type="match status" value="1"/>
</dbReference>
<dbReference type="CDD" id="cd00284">
    <property type="entry name" value="Cytochrome_b_N"/>
    <property type="match status" value="1"/>
</dbReference>
<dbReference type="FunFam" id="1.20.810.10:FF:000002">
    <property type="entry name" value="Cytochrome b"/>
    <property type="match status" value="1"/>
</dbReference>
<dbReference type="Gene3D" id="1.20.810.10">
    <property type="entry name" value="Cytochrome Bc1 Complex, Chain C"/>
    <property type="match status" value="1"/>
</dbReference>
<dbReference type="InterPro" id="IPR005798">
    <property type="entry name" value="Cyt_b/b6_C"/>
</dbReference>
<dbReference type="InterPro" id="IPR036150">
    <property type="entry name" value="Cyt_b/b6_C_sf"/>
</dbReference>
<dbReference type="InterPro" id="IPR005797">
    <property type="entry name" value="Cyt_b/b6_N"/>
</dbReference>
<dbReference type="InterPro" id="IPR027387">
    <property type="entry name" value="Cytb/b6-like_sf"/>
</dbReference>
<dbReference type="InterPro" id="IPR030689">
    <property type="entry name" value="Cytochrome_b"/>
</dbReference>
<dbReference type="InterPro" id="IPR048260">
    <property type="entry name" value="Cytochrome_b_C_euk/bac"/>
</dbReference>
<dbReference type="InterPro" id="IPR048259">
    <property type="entry name" value="Cytochrome_b_N_euk/bac"/>
</dbReference>
<dbReference type="InterPro" id="IPR016174">
    <property type="entry name" value="Di-haem_cyt_TM"/>
</dbReference>
<dbReference type="PANTHER" id="PTHR19271">
    <property type="entry name" value="CYTOCHROME B"/>
    <property type="match status" value="1"/>
</dbReference>
<dbReference type="PANTHER" id="PTHR19271:SF16">
    <property type="entry name" value="CYTOCHROME B"/>
    <property type="match status" value="1"/>
</dbReference>
<dbReference type="Pfam" id="PF00032">
    <property type="entry name" value="Cytochrom_B_C"/>
    <property type="match status" value="1"/>
</dbReference>
<dbReference type="Pfam" id="PF00033">
    <property type="entry name" value="Cytochrome_B"/>
    <property type="match status" value="1"/>
</dbReference>
<dbReference type="PIRSF" id="PIRSF038885">
    <property type="entry name" value="COB"/>
    <property type="match status" value="1"/>
</dbReference>
<dbReference type="SUPFAM" id="SSF81648">
    <property type="entry name" value="a domain/subunit of cytochrome bc1 complex (Ubiquinol-cytochrome c reductase)"/>
    <property type="match status" value="1"/>
</dbReference>
<dbReference type="SUPFAM" id="SSF81342">
    <property type="entry name" value="Transmembrane di-heme cytochromes"/>
    <property type="match status" value="1"/>
</dbReference>
<dbReference type="PROSITE" id="PS51003">
    <property type="entry name" value="CYTB_CTER"/>
    <property type="match status" value="1"/>
</dbReference>
<dbReference type="PROSITE" id="PS51002">
    <property type="entry name" value="CYTB_NTER"/>
    <property type="match status" value="1"/>
</dbReference>
<comment type="function">
    <text evidence="2">Component of the ubiquinol-cytochrome c reductase complex (complex III or cytochrome b-c1 complex) that is part of the mitochondrial respiratory chain. The b-c1 complex mediates electron transfer from ubiquinol to cytochrome c. Contributes to the generation of a proton gradient across the mitochondrial membrane that is then used for ATP synthesis.</text>
</comment>
<comment type="cofactor">
    <cofactor evidence="2">
        <name>heme b</name>
        <dbReference type="ChEBI" id="CHEBI:60344"/>
    </cofactor>
    <text evidence="2">Binds 2 heme b groups non-covalently.</text>
</comment>
<comment type="subunit">
    <text evidence="2">The cytochrome bc1 complex contains 11 subunits: 3 respiratory subunits (MT-CYB, CYC1 and UQCRFS1), 2 core proteins (UQCRC1 and UQCRC2) and 6 low-molecular weight proteins (UQCRH/QCR6, UQCRB/QCR7, UQCRQ/QCR8, UQCR10/QCR9, UQCR11/QCR10 and a cleavage product of UQCRFS1). This cytochrome bc1 complex then forms a dimer.</text>
</comment>
<comment type="subcellular location">
    <subcellularLocation>
        <location evidence="2">Mitochondrion inner membrane</location>
        <topology evidence="2">Multi-pass membrane protein</topology>
    </subcellularLocation>
</comment>
<comment type="miscellaneous">
    <text evidence="1">Heme 1 (or BL or b562) is low-potential and absorbs at about 562 nm, and heme 2 (or BH or b566) is high-potential and absorbs at about 566 nm.</text>
</comment>
<comment type="similarity">
    <text evidence="3 4">Belongs to the cytochrome b family.</text>
</comment>
<comment type="caution">
    <text evidence="2">The full-length protein contains only eight transmembrane helices, not nine as predicted by bioinformatics tools.</text>
</comment>
<evidence type="ECO:0000250" key="1"/>
<evidence type="ECO:0000250" key="2">
    <source>
        <dbReference type="UniProtKB" id="P00157"/>
    </source>
</evidence>
<evidence type="ECO:0000255" key="3">
    <source>
        <dbReference type="PROSITE-ProRule" id="PRU00967"/>
    </source>
</evidence>
<evidence type="ECO:0000255" key="4">
    <source>
        <dbReference type="PROSITE-ProRule" id="PRU00968"/>
    </source>
</evidence>
<proteinExistence type="inferred from homology"/>